<protein>
    <recommendedName>
        <fullName>DNA-binding protein SMUBP-2</fullName>
        <ecNumber evidence="21">3.6.4.12</ecNumber>
        <ecNumber evidence="16 18">3.6.4.13</ecNumber>
    </recommendedName>
    <alternativeName>
        <fullName>ATP-dependent helicase IGHMBP2</fullName>
    </alternativeName>
    <alternativeName>
        <fullName>Glial factor 1</fullName>
        <shortName>GF-1</shortName>
    </alternativeName>
    <alternativeName>
        <fullName>Immunoglobulin mu-binding protein 2</fullName>
    </alternativeName>
</protein>
<dbReference type="EC" id="3.6.4.12" evidence="21"/>
<dbReference type="EC" id="3.6.4.13" evidence="16 18"/>
<dbReference type="EMBL" id="L14754">
    <property type="protein sequence ID" value="AAA53082.1"/>
    <property type="molecule type" value="mRNA"/>
</dbReference>
<dbReference type="EMBL" id="L24544">
    <property type="protein sequence ID" value="AAA70430.1"/>
    <property type="molecule type" value="Genomic_DNA"/>
</dbReference>
<dbReference type="EMBL" id="AP000808">
    <property type="status" value="NOT_ANNOTATED_CDS"/>
    <property type="molecule type" value="Genomic_DNA"/>
</dbReference>
<dbReference type="EMBL" id="BC025299">
    <property type="protein sequence ID" value="AAH25299.1"/>
    <property type="molecule type" value="mRNA"/>
</dbReference>
<dbReference type="EMBL" id="M64979">
    <property type="protein sequence ID" value="AAA58611.1"/>
    <property type="molecule type" value="mRNA"/>
</dbReference>
<dbReference type="CCDS" id="CCDS8187.1"/>
<dbReference type="PIR" id="A47500">
    <property type="entry name" value="A47500"/>
</dbReference>
<dbReference type="RefSeq" id="NP_002171.2">
    <property type="nucleotide sequence ID" value="NM_002180.3"/>
</dbReference>
<dbReference type="PDB" id="1MSZ">
    <property type="method" value="NMR"/>
    <property type="chains" value="A=711-786"/>
</dbReference>
<dbReference type="PDB" id="2LRR">
    <property type="method" value="NMR"/>
    <property type="chains" value="A=711-786"/>
</dbReference>
<dbReference type="PDB" id="4B3F">
    <property type="method" value="X-ray"/>
    <property type="resolution" value="2.50 A"/>
    <property type="chains" value="X=3-648"/>
</dbReference>
<dbReference type="PDB" id="4B3G">
    <property type="method" value="X-ray"/>
    <property type="resolution" value="2.85 A"/>
    <property type="chains" value="A/B=3-648"/>
</dbReference>
<dbReference type="PDBsum" id="1MSZ"/>
<dbReference type="PDBsum" id="2LRR"/>
<dbReference type="PDBsum" id="4B3F"/>
<dbReference type="PDBsum" id="4B3G"/>
<dbReference type="BMRB" id="P38935"/>
<dbReference type="SMR" id="P38935"/>
<dbReference type="BioGRID" id="109728">
    <property type="interactions" value="36"/>
</dbReference>
<dbReference type="FunCoup" id="P38935">
    <property type="interactions" value="1354"/>
</dbReference>
<dbReference type="IntAct" id="P38935">
    <property type="interactions" value="32"/>
</dbReference>
<dbReference type="MINT" id="P38935"/>
<dbReference type="STRING" id="9606.ENSP00000255078"/>
<dbReference type="GlyGen" id="P38935">
    <property type="glycosylation" value="3 sites, 1 O-linked glycan (1 site)"/>
</dbReference>
<dbReference type="iPTMnet" id="P38935"/>
<dbReference type="PhosphoSitePlus" id="P38935"/>
<dbReference type="SwissPalm" id="P38935"/>
<dbReference type="BioMuta" id="IGHMBP2"/>
<dbReference type="DMDM" id="317373494"/>
<dbReference type="jPOST" id="P38935"/>
<dbReference type="MassIVE" id="P38935"/>
<dbReference type="PaxDb" id="9606-ENSP00000255078"/>
<dbReference type="PeptideAtlas" id="P38935"/>
<dbReference type="ProteomicsDB" id="55306"/>
<dbReference type="Pumba" id="P38935"/>
<dbReference type="Antibodypedia" id="54271">
    <property type="antibodies" value="94 antibodies from 22 providers"/>
</dbReference>
<dbReference type="DNASU" id="3508"/>
<dbReference type="Ensembl" id="ENST00000255078.8">
    <property type="protein sequence ID" value="ENSP00000255078.4"/>
    <property type="gene ID" value="ENSG00000132740.10"/>
</dbReference>
<dbReference type="GeneID" id="3508"/>
<dbReference type="KEGG" id="hsa:3508"/>
<dbReference type="MANE-Select" id="ENST00000255078.8">
    <property type="protein sequence ID" value="ENSP00000255078.4"/>
    <property type="RefSeq nucleotide sequence ID" value="NM_002180.3"/>
    <property type="RefSeq protein sequence ID" value="NP_002171.2"/>
</dbReference>
<dbReference type="UCSC" id="uc001ook.2">
    <property type="organism name" value="human"/>
</dbReference>
<dbReference type="AGR" id="HGNC:5542"/>
<dbReference type="CTD" id="3508"/>
<dbReference type="DisGeNET" id="3508"/>
<dbReference type="GeneCards" id="IGHMBP2"/>
<dbReference type="GeneReviews" id="IGHMBP2"/>
<dbReference type="HGNC" id="HGNC:5542">
    <property type="gene designation" value="IGHMBP2"/>
</dbReference>
<dbReference type="HPA" id="ENSG00000132740">
    <property type="expression patterns" value="Low tissue specificity"/>
</dbReference>
<dbReference type="MalaCards" id="IGHMBP2"/>
<dbReference type="MIM" id="600502">
    <property type="type" value="gene"/>
</dbReference>
<dbReference type="MIM" id="604320">
    <property type="type" value="phenotype"/>
</dbReference>
<dbReference type="MIM" id="616155">
    <property type="type" value="phenotype"/>
</dbReference>
<dbReference type="neXtProt" id="NX_P38935"/>
<dbReference type="OpenTargets" id="ENSG00000132740"/>
<dbReference type="Orphanet" id="443073">
    <property type="disease" value="Charcot-Marie-Tooth disease type 2S"/>
</dbReference>
<dbReference type="Orphanet" id="98920">
    <property type="disease" value="Spinal muscular atrophy with respiratory distress type 1"/>
</dbReference>
<dbReference type="PharmGKB" id="PA29731"/>
<dbReference type="VEuPathDB" id="HostDB:ENSG00000132740"/>
<dbReference type="eggNOG" id="KOG1803">
    <property type="taxonomic scope" value="Eukaryota"/>
</dbReference>
<dbReference type="GeneTree" id="ENSGT00930000151035"/>
<dbReference type="HOGENOM" id="CLU_001666_5_0_1"/>
<dbReference type="InParanoid" id="P38935"/>
<dbReference type="OMA" id="TIIHGPP"/>
<dbReference type="OrthoDB" id="6513042at2759"/>
<dbReference type="PAN-GO" id="P38935">
    <property type="GO annotations" value="3 GO annotations based on evolutionary models"/>
</dbReference>
<dbReference type="PhylomeDB" id="P38935"/>
<dbReference type="TreeFam" id="TF105388"/>
<dbReference type="BRENDA" id="3.6.4.12">
    <property type="organism ID" value="2681"/>
</dbReference>
<dbReference type="PathwayCommons" id="P38935"/>
<dbReference type="SignaLink" id="P38935"/>
<dbReference type="BioGRID-ORCS" id="3508">
    <property type="hits" value="22 hits in 1161 CRISPR screens"/>
</dbReference>
<dbReference type="ChiTaRS" id="IGHMBP2">
    <property type="organism name" value="human"/>
</dbReference>
<dbReference type="EvolutionaryTrace" id="P38935"/>
<dbReference type="GeneWiki" id="IGHMBP2"/>
<dbReference type="GenomeRNAi" id="3508"/>
<dbReference type="Pharos" id="P38935">
    <property type="development level" value="Tbio"/>
</dbReference>
<dbReference type="PRO" id="PR:P38935"/>
<dbReference type="Proteomes" id="UP000005640">
    <property type="component" value="Chromosome 11"/>
</dbReference>
<dbReference type="RNAct" id="P38935">
    <property type="molecule type" value="protein"/>
</dbReference>
<dbReference type="Bgee" id="ENSG00000132740">
    <property type="expression patterns" value="Expressed in mucosa of stomach and 119 other cell types or tissues"/>
</dbReference>
<dbReference type="ExpressionAtlas" id="P38935">
    <property type="expression patterns" value="baseline and differential"/>
</dbReference>
<dbReference type="GO" id="GO:0030424">
    <property type="term" value="C:axon"/>
    <property type="evidence" value="ECO:0000250"/>
    <property type="project" value="UniProtKB"/>
</dbReference>
<dbReference type="GO" id="GO:0005737">
    <property type="term" value="C:cytoplasm"/>
    <property type="evidence" value="ECO:0000314"/>
    <property type="project" value="UniProtKB"/>
</dbReference>
<dbReference type="GO" id="GO:0005829">
    <property type="term" value="C:cytosol"/>
    <property type="evidence" value="ECO:0000314"/>
    <property type="project" value="HPA"/>
</dbReference>
<dbReference type="GO" id="GO:0030426">
    <property type="term" value="C:growth cone"/>
    <property type="evidence" value="ECO:0000250"/>
    <property type="project" value="UniProtKB"/>
</dbReference>
<dbReference type="GO" id="GO:0016020">
    <property type="term" value="C:membrane"/>
    <property type="evidence" value="ECO:0007005"/>
    <property type="project" value="UniProtKB"/>
</dbReference>
<dbReference type="GO" id="GO:0016604">
    <property type="term" value="C:nuclear body"/>
    <property type="evidence" value="ECO:0000314"/>
    <property type="project" value="HPA"/>
</dbReference>
<dbReference type="GO" id="GO:0005654">
    <property type="term" value="C:nucleoplasm"/>
    <property type="evidence" value="ECO:0000314"/>
    <property type="project" value="HPA"/>
</dbReference>
<dbReference type="GO" id="GO:0005634">
    <property type="term" value="C:nucleus"/>
    <property type="evidence" value="ECO:0000314"/>
    <property type="project" value="UniProtKB"/>
</dbReference>
<dbReference type="GO" id="GO:1990904">
    <property type="term" value="C:ribonucleoprotein complex"/>
    <property type="evidence" value="ECO:0000250"/>
    <property type="project" value="UniProtKB"/>
</dbReference>
<dbReference type="GO" id="GO:0043139">
    <property type="term" value="F:5'-3' DNA helicase activity"/>
    <property type="evidence" value="ECO:0000314"/>
    <property type="project" value="UniProtKB"/>
</dbReference>
<dbReference type="GO" id="GO:0032574">
    <property type="term" value="F:5'-3' RNA helicase activity"/>
    <property type="evidence" value="ECO:0000314"/>
    <property type="project" value="UniProtKB"/>
</dbReference>
<dbReference type="GO" id="GO:0005524">
    <property type="term" value="F:ATP binding"/>
    <property type="evidence" value="ECO:0000314"/>
    <property type="project" value="UniProtKB"/>
</dbReference>
<dbReference type="GO" id="GO:0016887">
    <property type="term" value="F:ATP hydrolysis activity"/>
    <property type="evidence" value="ECO:0000314"/>
    <property type="project" value="UniProtKB"/>
</dbReference>
<dbReference type="GO" id="GO:0008094">
    <property type="term" value="F:ATP-dependent activity, acting on DNA"/>
    <property type="evidence" value="ECO:0000314"/>
    <property type="project" value="UniProtKB"/>
</dbReference>
<dbReference type="GO" id="GO:0008186">
    <property type="term" value="F:ATP-dependent activity, acting on RNA"/>
    <property type="evidence" value="ECO:0000314"/>
    <property type="project" value="UniProtKB"/>
</dbReference>
<dbReference type="GO" id="GO:0003677">
    <property type="term" value="F:DNA binding"/>
    <property type="evidence" value="ECO:0000314"/>
    <property type="project" value="UniProtKB"/>
</dbReference>
<dbReference type="GO" id="GO:0003678">
    <property type="term" value="F:DNA helicase activity"/>
    <property type="evidence" value="ECO:0000304"/>
    <property type="project" value="ProtInc"/>
</dbReference>
<dbReference type="GO" id="GO:0036121">
    <property type="term" value="F:double-stranded DNA helicase activity"/>
    <property type="evidence" value="ECO:0000314"/>
    <property type="project" value="UniProtKB"/>
</dbReference>
<dbReference type="GO" id="GO:0140296">
    <property type="term" value="F:general transcription initiation factor binding"/>
    <property type="evidence" value="ECO:0000353"/>
    <property type="project" value="UniProtKB"/>
</dbReference>
<dbReference type="GO" id="GO:0042802">
    <property type="term" value="F:identical protein binding"/>
    <property type="evidence" value="ECO:0000353"/>
    <property type="project" value="MGI"/>
</dbReference>
<dbReference type="GO" id="GO:0043022">
    <property type="term" value="F:ribosome binding"/>
    <property type="evidence" value="ECO:0000314"/>
    <property type="project" value="UniProtKB"/>
</dbReference>
<dbReference type="GO" id="GO:0003723">
    <property type="term" value="F:RNA binding"/>
    <property type="evidence" value="ECO:0000314"/>
    <property type="project" value="UniProtKB"/>
</dbReference>
<dbReference type="GO" id="GO:0003697">
    <property type="term" value="F:single-stranded DNA binding"/>
    <property type="evidence" value="ECO:0000314"/>
    <property type="project" value="UniProtKB"/>
</dbReference>
<dbReference type="GO" id="GO:0003727">
    <property type="term" value="F:single-stranded RNA binding"/>
    <property type="evidence" value="ECO:0000314"/>
    <property type="project" value="UniProtKB"/>
</dbReference>
<dbReference type="GO" id="GO:0000049">
    <property type="term" value="F:tRNA binding"/>
    <property type="evidence" value="ECO:0000314"/>
    <property type="project" value="UniProtKB"/>
</dbReference>
<dbReference type="GO" id="GO:0008270">
    <property type="term" value="F:zinc ion binding"/>
    <property type="evidence" value="ECO:0007669"/>
    <property type="project" value="UniProtKB-KW"/>
</dbReference>
<dbReference type="CDD" id="cd18044">
    <property type="entry name" value="DEXXQc_SMUBP2"/>
    <property type="match status" value="1"/>
</dbReference>
<dbReference type="CDD" id="cd02641">
    <property type="entry name" value="R3H_Smubp-2_like"/>
    <property type="match status" value="1"/>
</dbReference>
<dbReference type="CDD" id="cd18808">
    <property type="entry name" value="SF1_C_Upf1"/>
    <property type="match status" value="1"/>
</dbReference>
<dbReference type="FunFam" id="3.40.50.300:FF:001171">
    <property type="entry name" value="DNA-binding protein SMUBP-2"/>
    <property type="match status" value="1"/>
</dbReference>
<dbReference type="FunFam" id="3.40.50.300:FF:001146">
    <property type="entry name" value="DNA-binding protein SMUBP-2 isoform X1"/>
    <property type="match status" value="1"/>
</dbReference>
<dbReference type="FunFam" id="2.40.30.270:FF:000001">
    <property type="entry name" value="Immunoglobulin mu DNA-binding protein 2"/>
    <property type="match status" value="1"/>
</dbReference>
<dbReference type="FunFam" id="3.30.1370.50:FF:000002">
    <property type="entry name" value="Immunoglobulin mu DNA-binding protein 2"/>
    <property type="match status" value="1"/>
</dbReference>
<dbReference type="FunFam" id="4.10.1110.10:FF:000002">
    <property type="entry name" value="Immunoglobulin mu DNA-binding protein 2"/>
    <property type="match status" value="1"/>
</dbReference>
<dbReference type="Gene3D" id="2.40.30.270">
    <property type="match status" value="1"/>
</dbReference>
<dbReference type="Gene3D" id="4.10.1110.10">
    <property type="entry name" value="AN1-like Zinc finger"/>
    <property type="match status" value="1"/>
</dbReference>
<dbReference type="Gene3D" id="3.40.50.300">
    <property type="entry name" value="P-loop containing nucleotide triphosphate hydrolases"/>
    <property type="match status" value="2"/>
</dbReference>
<dbReference type="Gene3D" id="3.30.1370.50">
    <property type="entry name" value="R3H-like domain"/>
    <property type="match status" value="1"/>
</dbReference>
<dbReference type="InterPro" id="IPR003593">
    <property type="entry name" value="AAA+_ATPase"/>
</dbReference>
<dbReference type="InterPro" id="IPR035896">
    <property type="entry name" value="AN1-like_Znf"/>
</dbReference>
<dbReference type="InterPro" id="IPR050534">
    <property type="entry name" value="Coronavir_polyprotein_1ab"/>
</dbReference>
<dbReference type="InterPro" id="IPR041679">
    <property type="entry name" value="DNA2/NAM7-like_C"/>
</dbReference>
<dbReference type="InterPro" id="IPR041677">
    <property type="entry name" value="DNA2/NAM7_AAA_11"/>
</dbReference>
<dbReference type="InterPro" id="IPR014001">
    <property type="entry name" value="Helicase_ATP-bd"/>
</dbReference>
<dbReference type="InterPro" id="IPR027417">
    <property type="entry name" value="P-loop_NTPase"/>
</dbReference>
<dbReference type="InterPro" id="IPR001374">
    <property type="entry name" value="R3H_dom"/>
</dbReference>
<dbReference type="InterPro" id="IPR036867">
    <property type="entry name" value="R3H_dom_sf"/>
</dbReference>
<dbReference type="InterPro" id="IPR034072">
    <property type="entry name" value="R3H_Smubp-2"/>
</dbReference>
<dbReference type="InterPro" id="IPR047187">
    <property type="entry name" value="SF1_C_Upf1"/>
</dbReference>
<dbReference type="InterPro" id="IPR004483">
    <property type="entry name" value="SMUBP-2/Hcs1-like"/>
</dbReference>
<dbReference type="InterPro" id="IPR048761">
    <property type="entry name" value="SMUBP-2_HCS1_1B"/>
</dbReference>
<dbReference type="InterPro" id="IPR000058">
    <property type="entry name" value="Znf_AN1"/>
</dbReference>
<dbReference type="NCBIfam" id="TIGR00376">
    <property type="entry name" value="IGHMBP2 family helicase"/>
    <property type="match status" value="1"/>
</dbReference>
<dbReference type="PANTHER" id="PTHR43788:SF8">
    <property type="entry name" value="DNA-BINDING PROTEIN SMUBP-2"/>
    <property type="match status" value="1"/>
</dbReference>
<dbReference type="PANTHER" id="PTHR43788">
    <property type="entry name" value="DNA2/NAM7 HELICASE FAMILY MEMBER"/>
    <property type="match status" value="1"/>
</dbReference>
<dbReference type="Pfam" id="PF13086">
    <property type="entry name" value="AAA_11"/>
    <property type="match status" value="1"/>
</dbReference>
<dbReference type="Pfam" id="PF13087">
    <property type="entry name" value="AAA_12"/>
    <property type="match status" value="1"/>
</dbReference>
<dbReference type="Pfam" id="PF01424">
    <property type="entry name" value="R3H"/>
    <property type="match status" value="1"/>
</dbReference>
<dbReference type="Pfam" id="PF21138">
    <property type="entry name" value="SMUBP-2_HCS1_1B"/>
    <property type="match status" value="1"/>
</dbReference>
<dbReference type="Pfam" id="PF01428">
    <property type="entry name" value="zf-AN1"/>
    <property type="match status" value="1"/>
</dbReference>
<dbReference type="SMART" id="SM00382">
    <property type="entry name" value="AAA"/>
    <property type="match status" value="1"/>
</dbReference>
<dbReference type="SMART" id="SM00487">
    <property type="entry name" value="DEXDc"/>
    <property type="match status" value="1"/>
</dbReference>
<dbReference type="SMART" id="SM00393">
    <property type="entry name" value="R3H"/>
    <property type="match status" value="1"/>
</dbReference>
<dbReference type="SMART" id="SM00154">
    <property type="entry name" value="ZnF_AN1"/>
    <property type="match status" value="1"/>
</dbReference>
<dbReference type="SUPFAM" id="SSF118310">
    <property type="entry name" value="AN1-like Zinc finger"/>
    <property type="match status" value="1"/>
</dbReference>
<dbReference type="SUPFAM" id="SSF52540">
    <property type="entry name" value="P-loop containing nucleoside triphosphate hydrolases"/>
    <property type="match status" value="1"/>
</dbReference>
<dbReference type="SUPFAM" id="SSF82708">
    <property type="entry name" value="R3H domain"/>
    <property type="match status" value="1"/>
</dbReference>
<dbReference type="PROSITE" id="PS51061">
    <property type="entry name" value="R3H"/>
    <property type="match status" value="1"/>
</dbReference>
<dbReference type="PROSITE" id="PS51039">
    <property type="entry name" value="ZF_AN1"/>
    <property type="match status" value="1"/>
</dbReference>
<comment type="function">
    <text evidence="3 16 17 19 21 22">5' to 3' helicase that unwinds RNA and DNA duplexes in an ATP-dependent reaction (PubMed:19158098, PubMed:22999958, PubMed:30218034). Specific to 5'-phosphorylated single-stranded guanine-rich sequences (PubMed:22999958, PubMed:8349627). May play a role in RNA metabolism, ribosome biogenesis or initiation of translation (PubMed:19158098, PubMed:19299493). May play a role in regulation of transcription (By similarity). Interacts with tRNA-Tyr (PubMed:19299493).</text>
</comment>
<comment type="catalytic activity">
    <reaction evidence="16 21">
        <text>ATP + H2O = ADP + phosphate + H(+)</text>
        <dbReference type="Rhea" id="RHEA:13065"/>
        <dbReference type="ChEBI" id="CHEBI:15377"/>
        <dbReference type="ChEBI" id="CHEBI:15378"/>
        <dbReference type="ChEBI" id="CHEBI:30616"/>
        <dbReference type="ChEBI" id="CHEBI:43474"/>
        <dbReference type="ChEBI" id="CHEBI:456216"/>
        <dbReference type="EC" id="3.6.4.12"/>
    </reaction>
    <physiologicalReaction direction="left-to-right" evidence="16 21">
        <dbReference type="Rhea" id="RHEA:13066"/>
    </physiologicalReaction>
</comment>
<comment type="catalytic activity">
    <reaction evidence="16 18">
        <text>ATP + H2O = ADP + phosphate + H(+)</text>
        <dbReference type="Rhea" id="RHEA:13065"/>
        <dbReference type="ChEBI" id="CHEBI:15377"/>
        <dbReference type="ChEBI" id="CHEBI:15378"/>
        <dbReference type="ChEBI" id="CHEBI:30616"/>
        <dbReference type="ChEBI" id="CHEBI:43474"/>
        <dbReference type="ChEBI" id="CHEBI:456216"/>
        <dbReference type="EC" id="3.6.4.13"/>
    </reaction>
    <physiologicalReaction direction="left-to-right" evidence="16 18">
        <dbReference type="Rhea" id="RHEA:13066"/>
    </physiologicalReaction>
</comment>
<comment type="subunit">
    <text evidence="16 17">Homooligomer (PubMed:19299493). Interacts with RUVBL1 (PubMed:19299493). Interacts with RUVBL2 (PubMed:19299493). Interacts with GTF3C1 (PubMed:19299493). Interacts with ABT1 (PubMed:19299493). Interacts with ribosomes (PubMed:19158098).</text>
</comment>
<comment type="subcellular location">
    <subcellularLocation>
        <location evidence="17">Nucleus</location>
    </subcellularLocation>
    <subcellularLocation>
        <location evidence="17">Cytoplasm</location>
    </subcellularLocation>
    <subcellularLocation>
        <location evidence="1">Cell projection</location>
        <location evidence="1">Axon</location>
    </subcellularLocation>
</comment>
<comment type="tissue specificity">
    <text evidence="20">Expressed in all tissues examined. Expressed in the developing and adult human brain, with highest expression in the cerebellum. Moderately expressed in fibroblasts.</text>
</comment>
<comment type="domain">
    <text evidence="18 19">The R3H domain recognizes phosphorylated 5'-ends of single-stranded nucleic acids which promotes binding of nucleic acids and stimulates ATPase activity.</text>
</comment>
<comment type="disease" evidence="9 10 11 12 14 15 16">
    <disease id="DI-00403">
        <name>Neuronopathy, distal hereditary motor, autosomal recessive 1</name>
        <acronym>HMNR1</acronym>
        <description>A form of distal hereditary motor neuronopathy, a heterogeneous group of neuromuscular disorders caused by selective degeneration of motor neurons in the anterior horn of the spinal cord, without sensory deficit in the posterior horn. The overall clinical picture consists of a classical distal muscular atrophy syndrome in the legs without clinical sensory loss. The disease starts with weakness and wasting of distal muscles of the anterior tibial and peroneal compartments of the legs. Later on, weakness and atrophy may expand to the proximal muscles of the lower limbs and/or to the distal upper limbs.</description>
        <dbReference type="MIM" id="604320"/>
    </disease>
    <text>The disease is caused by variants affecting the gene represented in this entry.</text>
</comment>
<comment type="disease" evidence="20">
    <disease id="DI-04308">
        <name>Charcot-Marie-Tooth disease, axonal, type 2S</name>
        <acronym>CMT2S</acronym>
        <description>An axonal form of Charcot-Marie-Tooth disease, a disorder of the peripheral nervous system, characterized by progressive weakness and atrophy, initially of the peroneal muscles and later of the distal muscles of the arms. Charcot-Marie-Tooth disease is classified in two main groups on the basis of electrophysiologic properties and histopathology: primary peripheral demyelinating neuropathies (designated CMT1 when they are dominantly inherited) and primary peripheral axonal neuropathies (CMT2). Neuropathies of the CMT2 group are characterized by signs of axonal degeneration in the absence of obvious myelin alterations, normal or slightly reduced nerve conduction velocities, and progressive distal muscle weakness and atrophy.</description>
        <dbReference type="MIM" id="616155"/>
    </disease>
    <text>The disease is caused by variants affecting the gene represented in this entry.</text>
</comment>
<comment type="similarity">
    <text evidence="24">Belongs to the DNA2/NAM7 helicase family.</text>
</comment>
<proteinExistence type="evidence at protein level"/>
<evidence type="ECO:0000250" key="1">
    <source>
        <dbReference type="UniProtKB" id="P40694"/>
    </source>
</evidence>
<evidence type="ECO:0000250" key="2">
    <source>
        <dbReference type="UniProtKB" id="Q92900"/>
    </source>
</evidence>
<evidence type="ECO:0000250" key="3">
    <source>
        <dbReference type="UniProtKB" id="Q9EQN5"/>
    </source>
</evidence>
<evidence type="ECO:0000255" key="4"/>
<evidence type="ECO:0000255" key="5">
    <source>
        <dbReference type="PROSITE-ProRule" id="PRU00382"/>
    </source>
</evidence>
<evidence type="ECO:0000255" key="6">
    <source>
        <dbReference type="PROSITE-ProRule" id="PRU00449"/>
    </source>
</evidence>
<evidence type="ECO:0000255" key="7">
    <source>
        <dbReference type="PROSITE-ProRule" id="PRU00499"/>
    </source>
</evidence>
<evidence type="ECO:0000256" key="8">
    <source>
        <dbReference type="SAM" id="MobiDB-lite"/>
    </source>
</evidence>
<evidence type="ECO:0000269" key="9">
    <source>
    </source>
</evidence>
<evidence type="ECO:0000269" key="10">
    <source>
    </source>
</evidence>
<evidence type="ECO:0000269" key="11">
    <source>
    </source>
</evidence>
<evidence type="ECO:0000269" key="12">
    <source>
    </source>
</evidence>
<evidence type="ECO:0000269" key="13">
    <source>
    </source>
</evidence>
<evidence type="ECO:0000269" key="14">
    <source>
    </source>
</evidence>
<evidence type="ECO:0000269" key="15">
    <source>
    </source>
</evidence>
<evidence type="ECO:0000269" key="16">
    <source>
    </source>
</evidence>
<evidence type="ECO:0000269" key="17">
    <source>
    </source>
</evidence>
<evidence type="ECO:0000269" key="18">
    <source>
    </source>
</evidence>
<evidence type="ECO:0000269" key="19">
    <source>
    </source>
</evidence>
<evidence type="ECO:0000269" key="20">
    <source>
    </source>
</evidence>
<evidence type="ECO:0000269" key="21">
    <source>
    </source>
</evidence>
<evidence type="ECO:0000269" key="22">
    <source>
    </source>
</evidence>
<evidence type="ECO:0000269" key="23">
    <source ref="5"/>
</evidence>
<evidence type="ECO:0000305" key="24"/>
<evidence type="ECO:0000305" key="25">
    <source>
    </source>
</evidence>
<evidence type="ECO:0007744" key="26">
    <source>
        <dbReference type="PDB" id="2LRR"/>
    </source>
</evidence>
<evidence type="ECO:0007744" key="27">
    <source>
        <dbReference type="PDB" id="4B3F"/>
    </source>
</evidence>
<evidence type="ECO:0007744" key="28">
    <source>
        <dbReference type="PDB" id="4B3G"/>
    </source>
</evidence>
<evidence type="ECO:0007744" key="29">
    <source>
    </source>
</evidence>
<evidence type="ECO:0007744" key="30">
    <source>
    </source>
</evidence>
<evidence type="ECO:0007829" key="31">
    <source>
        <dbReference type="PDB" id="1MSZ"/>
    </source>
</evidence>
<evidence type="ECO:0007829" key="32">
    <source>
        <dbReference type="PDB" id="4B3F"/>
    </source>
</evidence>
<evidence type="ECO:0007829" key="33">
    <source>
        <dbReference type="PDB" id="4B3G"/>
    </source>
</evidence>
<name>SMBP2_HUMAN</name>
<keyword id="KW-0002">3D-structure</keyword>
<keyword id="KW-0007">Acetylation</keyword>
<keyword id="KW-0010">Activator</keyword>
<keyword id="KW-0067">ATP-binding</keyword>
<keyword id="KW-0966">Cell projection</keyword>
<keyword id="KW-0144">Charcot-Marie-Tooth disease</keyword>
<keyword id="KW-0963">Cytoplasm</keyword>
<keyword id="KW-0903">Direct protein sequencing</keyword>
<keyword id="KW-0225">Disease variant</keyword>
<keyword id="KW-0238">DNA-binding</keyword>
<keyword id="KW-0347">Helicase</keyword>
<keyword id="KW-0378">Hydrolase</keyword>
<keyword id="KW-0479">Metal-binding</keyword>
<keyword id="KW-0523">Neurodegeneration</keyword>
<keyword id="KW-0622">Neuropathy</keyword>
<keyword id="KW-0547">Nucleotide-binding</keyword>
<keyword id="KW-0539">Nucleus</keyword>
<keyword id="KW-1267">Proteomics identification</keyword>
<keyword id="KW-1185">Reference proteome</keyword>
<keyword id="KW-0687">Ribonucleoprotein</keyword>
<keyword id="KW-0694">RNA-binding</keyword>
<keyword id="KW-0804">Transcription</keyword>
<keyword id="KW-0805">Transcription regulation</keyword>
<keyword id="KW-0820">tRNA-binding</keyword>
<keyword id="KW-0862">Zinc</keyword>
<keyword id="KW-0863">Zinc-finger</keyword>
<organism>
    <name type="scientific">Homo sapiens</name>
    <name type="common">Human</name>
    <dbReference type="NCBI Taxonomy" id="9606"/>
    <lineage>
        <taxon>Eukaryota</taxon>
        <taxon>Metazoa</taxon>
        <taxon>Chordata</taxon>
        <taxon>Craniata</taxon>
        <taxon>Vertebrata</taxon>
        <taxon>Euteleostomi</taxon>
        <taxon>Mammalia</taxon>
        <taxon>Eutheria</taxon>
        <taxon>Euarchontoglires</taxon>
        <taxon>Primates</taxon>
        <taxon>Haplorrhini</taxon>
        <taxon>Catarrhini</taxon>
        <taxon>Hominidae</taxon>
        <taxon>Homo</taxon>
    </lineage>
</organism>
<reference key="1">
    <citation type="journal article" date="1993" name="J. Biol. Chem.">
        <title>The human S mu bp-2, a DNA-binding protein specific to the single-stranded guanine-rich sequence related to the immunoglobulin mu chain switch region.</title>
        <authorList>
            <person name="Fukita Y."/>
            <person name="Mizuta T.-R."/>
            <person name="Shirozu M."/>
            <person name="Ozawa K."/>
            <person name="Shimizu A."/>
            <person name="Honjo T."/>
        </authorList>
    </citation>
    <scope>NUCLEOTIDE SEQUENCE [MRNA]</scope>
    <scope>FUNCTION</scope>
    <scope>VARIANTS SER-201 AND VAL-275</scope>
</reference>
<reference key="2">
    <citation type="journal article" date="1999" name="Virology">
        <title>Smubp-2 represses the Epstein-Barr virus lytic switch promoter.</title>
        <authorList>
            <person name="Zhang Q."/>
            <person name="Wang Y.C."/>
            <person name="Montalvo E.A."/>
        </authorList>
    </citation>
    <scope>NUCLEOTIDE SEQUENCE [GENOMIC DNA]</scope>
</reference>
<reference key="3">
    <citation type="journal article" date="2006" name="Nature">
        <title>Human chromosome 11 DNA sequence and analysis including novel gene identification.</title>
        <authorList>
            <person name="Taylor T.D."/>
            <person name="Noguchi H."/>
            <person name="Totoki Y."/>
            <person name="Toyoda A."/>
            <person name="Kuroki Y."/>
            <person name="Dewar K."/>
            <person name="Lloyd C."/>
            <person name="Itoh T."/>
            <person name="Takeda T."/>
            <person name="Kim D.-W."/>
            <person name="She X."/>
            <person name="Barlow K.F."/>
            <person name="Bloom T."/>
            <person name="Bruford E."/>
            <person name="Chang J.L."/>
            <person name="Cuomo C.A."/>
            <person name="Eichler E."/>
            <person name="FitzGerald M.G."/>
            <person name="Jaffe D.B."/>
            <person name="LaButti K."/>
            <person name="Nicol R."/>
            <person name="Park H.-S."/>
            <person name="Seaman C."/>
            <person name="Sougnez C."/>
            <person name="Yang X."/>
            <person name="Zimmer A.R."/>
            <person name="Zody M.C."/>
            <person name="Birren B.W."/>
            <person name="Nusbaum C."/>
            <person name="Fujiyama A."/>
            <person name="Hattori M."/>
            <person name="Rogers J."/>
            <person name="Lander E.S."/>
            <person name="Sakaki Y."/>
        </authorList>
    </citation>
    <scope>NUCLEOTIDE SEQUENCE [LARGE SCALE GENOMIC DNA]</scope>
</reference>
<reference key="4">
    <citation type="journal article" date="2004" name="Genome Res.">
        <title>The status, quality, and expansion of the NIH full-length cDNA project: the Mammalian Gene Collection (MGC).</title>
        <authorList>
            <consortium name="The MGC Project Team"/>
        </authorList>
    </citation>
    <scope>NUCLEOTIDE SEQUENCE [LARGE SCALE MRNA] OF 1-868</scope>
    <source>
        <tissue>Brain</tissue>
    </source>
</reference>
<reference key="5">
    <citation type="submission" date="2007-07" db="UniProtKB">
        <authorList>
            <person name="Bienvenut W.V."/>
            <person name="Boldt K."/>
            <person name="von Kriegsheim A.F."/>
            <person name="Kolch W."/>
        </authorList>
    </citation>
    <scope>PROTEIN SEQUENCE OF 2-12; 221-233 AND 824-831</scope>
    <scope>CLEAVAGE OF INITIATOR METHIONINE</scope>
    <scope>ACETYLATION AT ALA-2</scope>
    <scope>IDENTIFICATION BY MASS SPECTROMETRY</scope>
    <source>
        <tissue>Hepatoma</tissue>
    </source>
</reference>
<reference key="6">
    <citation type="journal article" date="1991" name="J. Biol. Chem.">
        <title>A recombinant cDNA derived from human brain encodes a DNA binding protein that stimulates transcription of the human neurotropic virus JCV.</title>
        <authorList>
            <person name="Kerr D."/>
            <person name="Khalili K."/>
        </authorList>
    </citation>
    <scope>NUCLEOTIDE SEQUENCE [MRNA] OF 491-866</scope>
    <source>
        <tissue>Brain</tissue>
    </source>
</reference>
<reference key="7">
    <citation type="journal article" date="2007" name="Science">
        <title>ATM and ATR substrate analysis reveals extensive protein networks responsive to DNA damage.</title>
        <authorList>
            <person name="Matsuoka S."/>
            <person name="Ballif B.A."/>
            <person name="Smogorzewska A."/>
            <person name="McDonald E.R. III"/>
            <person name="Hurov K.E."/>
            <person name="Luo J."/>
            <person name="Bakalarski C.E."/>
            <person name="Zhao Z."/>
            <person name="Solimini N."/>
            <person name="Lerenthal Y."/>
            <person name="Shiloh Y."/>
            <person name="Gygi S.P."/>
            <person name="Elledge S.J."/>
        </authorList>
    </citation>
    <scope>IDENTIFICATION BY MASS SPECTROMETRY [LARGE SCALE ANALYSIS]</scope>
    <source>
        <tissue>Embryonic kidney</tissue>
    </source>
</reference>
<reference key="8">
    <citation type="journal article" date="2009" name="Hum. Mol. Genet.">
        <title>IGHMBP2 is a ribosome-associated helicase inactive in the neuromuscular disorder distal SMA type 1 (DSMA1).</title>
        <authorList>
            <person name="Guenther U.P."/>
            <person name="Handoko L."/>
            <person name="Laggerbauer B."/>
            <person name="Jablonka S."/>
            <person name="Chari A."/>
            <person name="Alzheimer M."/>
            <person name="Ohmer J."/>
            <person name="Ploettner O."/>
            <person name="Gehring N."/>
            <person name="Sickmann A."/>
            <person name="von Au K."/>
            <person name="Schuelke M."/>
            <person name="Fischer U."/>
        </authorList>
    </citation>
    <scope>FUNCTION AS AN ATP-DEPENDENT HELICASE</scope>
    <scope>CATALYTIC ACTIVITY</scope>
    <scope>INTERACTION WITH RIBOSOMES</scope>
    <scope>CHARACTERIZATION OF VARIANTS HMNR1 ARG-196; ALA-221; ARG-241; LYS-382; PRO-445; ILE-493; ASN-565; ILE-583 AND HIS-603</scope>
</reference>
<reference key="9">
    <citation type="journal article" date="2009" name="Hum. Mol. Genet.">
        <title>Biochemical and genetic evidence for a role of IGHMBP2 in the translational machinery.</title>
        <authorList>
            <person name="de Planell-Saguer M."/>
            <person name="Schroeder D.G."/>
            <person name="Rodicio M.C."/>
            <person name="Cox G.A."/>
            <person name="Mourelatos Z."/>
        </authorList>
    </citation>
    <scope>FUNCTION</scope>
    <scope>SUBCELLULAR LOCATION</scope>
    <scope>SUBUNIT</scope>
    <scope>INTERACTION WITH RUVBL1; RUVBL2; GTF3C1 AND ABT1</scope>
    <scope>TRNA-BINDING</scope>
</reference>
<reference key="10">
    <citation type="journal article" date="2010" name="Sci. Signal.">
        <title>Quantitative phosphoproteomics reveals widespread full phosphorylation site occupancy during mitosis.</title>
        <authorList>
            <person name="Olsen J.V."/>
            <person name="Vermeulen M."/>
            <person name="Santamaria A."/>
            <person name="Kumar C."/>
            <person name="Miller M.L."/>
            <person name="Jensen L.J."/>
            <person name="Gnad F."/>
            <person name="Cox J."/>
            <person name="Jensen T.S."/>
            <person name="Nigg E.A."/>
            <person name="Brunak S."/>
            <person name="Mann M."/>
        </authorList>
    </citation>
    <scope>IDENTIFICATION BY MASS SPECTROMETRY [LARGE SCALE ANALYSIS]</scope>
    <source>
        <tissue>Cervix carcinoma</tissue>
    </source>
</reference>
<reference key="11">
    <citation type="journal article" date="2012" name="Mol. Cell. Proteomics">
        <title>Comparative large-scale characterisation of plant vs. mammal proteins reveals similar and idiosyncratic N-alpha acetylation features.</title>
        <authorList>
            <person name="Bienvenut W.V."/>
            <person name="Sumpton D."/>
            <person name="Martinez A."/>
            <person name="Lilla S."/>
            <person name="Espagne C."/>
            <person name="Meinnel T."/>
            <person name="Giglione C."/>
        </authorList>
    </citation>
    <scope>ACETYLATION [LARGE SCALE ANALYSIS] AT ALA-2</scope>
    <scope>CLEAVAGE OF INITIATOR METHIONINE [LARGE SCALE ANALYSIS]</scope>
    <scope>IDENTIFICATION BY MASS SPECTROMETRY [LARGE SCALE ANALYSIS]</scope>
</reference>
<reference key="12">
    <citation type="journal article" date="2012" name="Proc. Natl. Acad. Sci. U.S.A.">
        <title>N-terminal acetylome analyses and functional insights of the N-terminal acetyltransferase NatB.</title>
        <authorList>
            <person name="Van Damme P."/>
            <person name="Lasa M."/>
            <person name="Polevoda B."/>
            <person name="Gazquez C."/>
            <person name="Elosegui-Artola A."/>
            <person name="Kim D.S."/>
            <person name="De Juan-Pardo E."/>
            <person name="Demeyer K."/>
            <person name="Hole K."/>
            <person name="Larrea E."/>
            <person name="Timmerman E."/>
            <person name="Prieto J."/>
            <person name="Arnesen T."/>
            <person name="Sherman F."/>
            <person name="Gevaert K."/>
            <person name="Aldabe R."/>
        </authorList>
    </citation>
    <scope>ACETYLATION [LARGE SCALE ANALYSIS] AT ALA-2</scope>
    <scope>CLEAVAGE OF INITIATOR METHIONINE [LARGE SCALE ANALYSIS]</scope>
    <scope>IDENTIFICATION BY MASS SPECTROMETRY [LARGE SCALE ANALYSIS]</scope>
</reference>
<reference key="13">
    <citation type="journal article" date="2013" name="J. Proteome Res.">
        <title>Toward a comprehensive characterization of a human cancer cell phosphoproteome.</title>
        <authorList>
            <person name="Zhou H."/>
            <person name="Di Palma S."/>
            <person name="Preisinger C."/>
            <person name="Peng M."/>
            <person name="Polat A.N."/>
            <person name="Heck A.J."/>
            <person name="Mohammed S."/>
        </authorList>
    </citation>
    <scope>IDENTIFICATION BY MASS SPECTROMETRY [LARGE SCALE ANALYSIS]</scope>
    <source>
        <tissue>Cervix carcinoma</tissue>
        <tissue>Erythroleukemia</tissue>
    </source>
</reference>
<reference key="14">
    <citation type="journal article" date="2018" name="Nat. Commun.">
        <title>UPF1-like helicase grip on nucleic acids dictates processivity.</title>
        <authorList>
            <person name="Kanaan J."/>
            <person name="Raj S."/>
            <person name="Decourty L."/>
            <person name="Saveanu C."/>
            <person name="Croquette V."/>
            <person name="Le Hir H."/>
        </authorList>
    </citation>
    <scope>FUNCTION</scope>
    <scope>CATALYTIC ACTIVITY</scope>
</reference>
<reference key="15">
    <citation type="journal article" date="2003" name="J. Mol. Biol.">
        <title>Solution structure of the R3H domain from human Smubp-2.</title>
        <authorList>
            <person name="Liepinsh E."/>
            <person name="Leonchiks A."/>
            <person name="Sharipo A."/>
            <person name="Guignard L."/>
            <person name="Otting G."/>
        </authorList>
    </citation>
    <scope>STRUCTURE BY NMR OF 709-794</scope>
</reference>
<reference evidence="26" key="16">
    <citation type="journal article" date="2012" name="J. Mol. Biol.">
        <title>Structural basis for 5'-end-specific recognition of single-stranded DNA by the R3H domain from human Smubp-2.</title>
        <authorList>
            <person name="Jaudzems K."/>
            <person name="Jia X."/>
            <person name="Yagi H."/>
            <person name="Zhulenkovs D."/>
            <person name="Graham B."/>
            <person name="Otting G."/>
            <person name="Liepinsh E."/>
        </authorList>
    </citation>
    <scope>STRUCTURE BY NMR OF 711-786 IN COMPLEX WITH THE 5'-END OF SINGLE-STRANDED DNA</scope>
    <scope>FUNCTION</scope>
    <scope>DOMAIN</scope>
</reference>
<reference evidence="27 28" key="17">
    <citation type="journal article" date="2012" name="Nucleic Acids Res.">
        <title>The Ighmbp2 helicase structure reveals the molecular basis for disease-causing mutations in DMSA1.</title>
        <authorList>
            <person name="Lim S.C."/>
            <person name="Bowler M.W."/>
            <person name="Lai T.F."/>
            <person name="Song H."/>
        </authorList>
    </citation>
    <scope>X-RAY CRYSTALLOGRAPHY (2.5 ANGSTROMS) OF 3-648 IN COMPLEX WITH RNA</scope>
    <scope>FUNCTION</scope>
    <scope>CATALYTIC ACTIVITY</scope>
    <scope>DOMAIN</scope>
</reference>
<reference key="18">
    <citation type="journal article" date="2001" name="Nat. Genet.">
        <title>Mutations in the gene encoding immunoglobulin mu-binding protein 2 cause spinal muscular atrophy with respiratory distress type 1.</title>
        <authorList>
            <person name="Grohmann K."/>
            <person name="Schuelke M."/>
            <person name="Diers A."/>
            <person name="Hoffmann K."/>
            <person name="Lucke B."/>
            <person name="Adams C."/>
            <person name="Bertini E."/>
            <person name="Leonhardt-Horti H."/>
            <person name="Muntoni F."/>
            <person name="Ouvrier R."/>
            <person name="Pfeufer A."/>
            <person name="Rossi R."/>
            <person name="Van Maldergem L."/>
            <person name="Wilmshurst J.M."/>
            <person name="Wienker T.F."/>
            <person name="Sendtner M."/>
            <person name="Rudnik-Schoeneborn S."/>
            <person name="Zerres K."/>
            <person name="Huebner C."/>
        </authorList>
    </citation>
    <scope>VARIANTS HMNR1 ARG-213; LYS-514 AND ILE-580</scope>
</reference>
<reference key="19">
    <citation type="journal article" date="2003" name="Ann. Neurol.">
        <title>Infantile spinal muscular atrophy with respiratory distress type 1 (SMARD1).</title>
        <authorList>
            <person name="Grohmann K."/>
            <person name="Varon R."/>
            <person name="Stolz P."/>
            <person name="Schuelke M."/>
            <person name="Janetzki C."/>
            <person name="Bertini E."/>
            <person name="Bushby K."/>
            <person name="Muntoni F."/>
            <person name="Ouvrier R."/>
            <person name="Van Maldergem L."/>
            <person name="Goemans N.M.L.A."/>
            <person name="Lochmueller H."/>
            <person name="Eichholz S."/>
            <person name="Adams C."/>
            <person name="Bosch F."/>
            <person name="Grattan-Smith P."/>
            <person name="Navarro C."/>
            <person name="Neitzel H."/>
            <person name="Polster T."/>
            <person name="Topaloglu H."/>
            <person name="Steglich C."/>
            <person name="Guenther U.P."/>
            <person name="Zerres K."/>
            <person name="Rudnik-Schoeneborn S."/>
            <person name="Huebner C."/>
        </authorList>
    </citation>
    <scope>VARIANTS HMNR1 PRO-192; ALA-221; ARG-241; LYS-334; PRO-361; PRO-364; LYS-382; PRO-426; ASN-565; LYS-572 DEL; PRO-577; ILE-583; CYS-586; HIS-603; CYS-637 AND GLU-974</scope>
</reference>
<reference key="20">
    <citation type="journal article" date="2004" name="Hum. Genet.">
        <title>Genomic rearrangements at the IGHMBP2 gene locus in two patients with SMARD1.</title>
        <authorList>
            <person name="Guenther U.P."/>
            <person name="Schuelke M."/>
            <person name="Bertini E."/>
            <person name="D'Amico A."/>
            <person name="Goemans N."/>
            <person name="Grohmann K."/>
            <person name="Huebner C."/>
            <person name="Varon R."/>
        </authorList>
    </citation>
    <scope>VARIANT HMNR1 LEU-369</scope>
</reference>
<reference key="21">
    <citation type="journal article" date="2004" name="Hum. Mutat.">
        <title>Allelic heterogeneity of SMARD1 at the IGHMBP2 locus.</title>
        <authorList>
            <person name="Maystadt I."/>
            <person name="Zarhrate M."/>
            <person name="Landrieu P."/>
            <person name="Boespflug-Tanguy O."/>
            <person name="Sukno S."/>
            <person name="Collignon P."/>
            <person name="Melki J."/>
            <person name="Verellen-Dumoulin C."/>
            <person name="Munnich A."/>
            <person name="Viollet L."/>
        </authorList>
    </citation>
    <scope>VARIANTS HMNR1 ARG-196; LEU-216; PRO-251; ASN-565; PRO-577; CYS-603 AND CYS-637</scope>
</reference>
<reference key="22">
    <citation type="journal article" date="2005" name="Pediatr. Neurol.">
        <title>A new mutation of IGHMBP2 gene in spinal muscular atrophy with respiratory distress type 1.</title>
        <authorList>
            <person name="Tachi N."/>
            <person name="Kikuchi S."/>
            <person name="Kozuka N."/>
            <person name="Nogami A."/>
        </authorList>
    </citation>
    <scope>VARIANT LYS-879</scope>
</reference>
<reference key="23">
    <citation type="journal article" date="2007" name="Hum. Mutat.">
        <title>Clinical and mutational profile in spinal muscular atrophy with respiratory distress (SMARD): defining novel phenotypes through hierarchical cluster analysis.</title>
        <authorList>
            <person name="Guenther U.P."/>
            <person name="Varon R."/>
            <person name="Schlicke M."/>
            <person name="Dutrannoy V."/>
            <person name="Volk A."/>
            <person name="Huebner C."/>
            <person name="von Au K."/>
            <person name="Schuelke M."/>
        </authorList>
    </citation>
    <scope>VARIANTS HMNR1 PRO-17; PRO-361; ARG-386; PRO-445; PRO-472 AND SER-581</scope>
</reference>
<reference key="24">
    <citation type="journal article" date="2009" name="J. Mol. Med.">
        <title>Clinical variability in distal spinal muscular atrophy type 1 (DSMA1): determination of steady-state IGHMBP2 protein levels in five patients with infantile and juvenile disease.</title>
        <authorList>
            <person name="Guenther U.P."/>
            <person name="Handoko L."/>
            <person name="Varon R."/>
            <person name="Stephani U."/>
            <person name="Tsao C.Y."/>
            <person name="Mendell J.R."/>
            <person name="Luetzkendorf S."/>
            <person name="Huebner C."/>
            <person name="von Au K."/>
            <person name="Jablonka S."/>
            <person name="Dittmar G."/>
            <person name="Heinemann U."/>
            <person name="Schuetz A."/>
            <person name="Schuelke M."/>
        </authorList>
    </citation>
    <scope>VARIANT HMNR1 ILE-493</scope>
    <scope>CHARACTERIZATION OF VARIANT HMNR1 ILE-493</scope>
</reference>
<reference key="25">
    <citation type="journal article" date="2014" name="Am. J. Hum. Genet.">
        <title>Truncating and missense mutations in IGHMBP2 cause Charcot-Marie Tooth disease type 2.</title>
        <authorList>
            <person name="Cottenie E."/>
            <person name="Kochanski A."/>
            <person name="Jordanova A."/>
            <person name="Bansagi B."/>
            <person name="Zimon M."/>
            <person name="Horga A."/>
            <person name="Jaunmuktane Z."/>
            <person name="Saveri P."/>
            <person name="Rasic V.M."/>
            <person name="Baets J."/>
            <person name="Bartsakoulia M."/>
            <person name="Ploski R."/>
            <person name="Teterycz P."/>
            <person name="Nikolic M."/>
            <person name="Quinlivan R."/>
            <person name="Laura M."/>
            <person name="Sweeney M.G."/>
            <person name="Taroni F."/>
            <person name="Lunn M.P."/>
            <person name="Moroni I."/>
            <person name="Gonzalez M."/>
            <person name="Hanna M.G."/>
            <person name="Bettencourt C."/>
            <person name="Chabrol E."/>
            <person name="Franke A."/>
            <person name="von Au K."/>
            <person name="Schilhabel M."/>
            <person name="Kabzinska D."/>
            <person name="Hausmanowa-Petrusewicz I."/>
            <person name="Brandner S."/>
            <person name="Lim S.C."/>
            <person name="Song H."/>
            <person name="Choi B.O."/>
            <person name="Horvath R."/>
            <person name="Chung K.W."/>
            <person name="Zuchner S."/>
            <person name="Pareyson D."/>
            <person name="Harms M."/>
            <person name="Reilly M.M."/>
            <person name="Houlden H."/>
        </authorList>
    </citation>
    <scope>INVOLVEMENT IN CMT2S</scope>
    <scope>TISSUE SPECIFICITY</scope>
    <scope>VARIANTS CMT2S VAL-202; GLY-373 AND THR-528</scope>
</reference>
<feature type="initiator methionine" description="Removed" evidence="23 29 30">
    <location>
        <position position="1"/>
    </location>
</feature>
<feature type="chain" id="PRO_0000080701" description="DNA-binding protein SMUBP-2">
    <location>
        <begin position="2"/>
        <end position="993"/>
    </location>
</feature>
<feature type="domain" description="R3H" evidence="5">
    <location>
        <begin position="723"/>
        <end position="786"/>
    </location>
</feature>
<feature type="zinc finger region" description="AN1-type" evidence="6">
    <location>
        <begin position="891"/>
        <end position="940"/>
    </location>
</feature>
<feature type="region of interest" description="SS DNA-binding" evidence="22 25">
    <location>
        <begin position="638"/>
        <end position="785"/>
    </location>
</feature>
<feature type="region of interest" description="Disordered" evidence="8">
    <location>
        <begin position="651"/>
        <end position="723"/>
    </location>
</feature>
<feature type="region of interest" description="Disordered" evidence="8">
    <location>
        <begin position="782"/>
        <end position="828"/>
    </location>
</feature>
<feature type="region of interest" description="Disordered" evidence="8">
    <location>
        <begin position="841"/>
        <end position="879"/>
    </location>
</feature>
<feature type="region of interest" description="Disordered" evidence="8">
    <location>
        <begin position="971"/>
        <end position="993"/>
    </location>
</feature>
<feature type="short sequence motif" description="Nuclear localization signal" evidence="4">
    <location>
        <begin position="864"/>
        <end position="868"/>
    </location>
</feature>
<feature type="compositionally biased region" description="Polar residues" evidence="8">
    <location>
        <begin position="653"/>
        <end position="662"/>
    </location>
</feature>
<feature type="compositionally biased region" description="Polar residues" evidence="8">
    <location>
        <begin position="669"/>
        <end position="681"/>
    </location>
</feature>
<feature type="compositionally biased region" description="Basic and acidic residues" evidence="8">
    <location>
        <begin position="818"/>
        <end position="828"/>
    </location>
</feature>
<feature type="compositionally biased region" description="Polar residues" evidence="8">
    <location>
        <begin position="842"/>
        <end position="859"/>
    </location>
</feature>
<feature type="binding site" evidence="7">
    <location>
        <begin position="214"/>
        <end position="221"/>
    </location>
    <ligand>
        <name>ATP</name>
        <dbReference type="ChEBI" id="CHEBI:30616"/>
    </ligand>
</feature>
<feature type="binding site" evidence="2">
    <location>
        <position position="403"/>
    </location>
    <ligand>
        <name>ATP</name>
        <dbReference type="ChEBI" id="CHEBI:30616"/>
    </ligand>
</feature>
<feature type="binding site" evidence="2">
    <location>
        <position position="442"/>
    </location>
    <ligand>
        <name>ATP</name>
        <dbReference type="ChEBI" id="CHEBI:30616"/>
    </ligand>
</feature>
<feature type="binding site" evidence="2">
    <location>
        <position position="571"/>
    </location>
    <ligand>
        <name>ATP</name>
        <dbReference type="ChEBI" id="CHEBI:30616"/>
    </ligand>
</feature>
<feature type="binding site" evidence="6">
    <location>
        <position position="897"/>
    </location>
    <ligand>
        <name>Zn(2+)</name>
        <dbReference type="ChEBI" id="CHEBI:29105"/>
        <label>1</label>
    </ligand>
</feature>
<feature type="binding site" evidence="6">
    <location>
        <position position="902"/>
    </location>
    <ligand>
        <name>Zn(2+)</name>
        <dbReference type="ChEBI" id="CHEBI:29105"/>
        <label>1</label>
    </ligand>
</feature>
<feature type="binding site" evidence="6">
    <location>
        <position position="913"/>
    </location>
    <ligand>
        <name>Zn(2+)</name>
        <dbReference type="ChEBI" id="CHEBI:29105"/>
        <label>2</label>
    </ligand>
</feature>
<feature type="binding site" evidence="6">
    <location>
        <position position="916"/>
    </location>
    <ligand>
        <name>Zn(2+)</name>
        <dbReference type="ChEBI" id="CHEBI:29105"/>
        <label>2</label>
    </ligand>
</feature>
<feature type="binding site" evidence="6">
    <location>
        <position position="921"/>
    </location>
    <ligand>
        <name>Zn(2+)</name>
        <dbReference type="ChEBI" id="CHEBI:29105"/>
        <label>1</label>
    </ligand>
</feature>
<feature type="binding site" evidence="6">
    <location>
        <position position="924"/>
    </location>
    <ligand>
        <name>Zn(2+)</name>
        <dbReference type="ChEBI" id="CHEBI:29105"/>
        <label>1</label>
    </ligand>
</feature>
<feature type="binding site" evidence="6">
    <location>
        <position position="930"/>
    </location>
    <ligand>
        <name>Zn(2+)</name>
        <dbReference type="ChEBI" id="CHEBI:29105"/>
        <label>2</label>
    </ligand>
</feature>
<feature type="binding site" evidence="6">
    <location>
        <position position="932"/>
    </location>
    <ligand>
        <name>Zn(2+)</name>
        <dbReference type="ChEBI" id="CHEBI:29105"/>
        <label>2</label>
    </ligand>
</feature>
<feature type="modified residue" description="N-acetylalanine" evidence="23 29 30">
    <location>
        <position position="2"/>
    </location>
</feature>
<feature type="sequence variant" id="VAR_058497" description="In HMNR1; dbSNP:rs1594412120." evidence="14">
    <original>L</original>
    <variation>P</variation>
    <location>
        <position position="17"/>
    </location>
</feature>
<feature type="sequence variant" id="VAR_055225" description="In dbSNP:rs2228206.">
    <original>A</original>
    <variation>T</variation>
    <location>
        <position position="75"/>
    </location>
</feature>
<feature type="sequence variant" id="VAR_022321" description="In HMNR1; dbSNP:rs879253996." evidence="10">
    <original>L</original>
    <variation>P</variation>
    <location>
        <position position="192"/>
    </location>
</feature>
<feature type="sequence variant" id="VAR_058498" description="In HMNR1; severe reduction of ATPase activity and loss of helicase activity on RNA duplices; dbSNP:rs1594422506." evidence="11 16">
    <original>Q</original>
    <variation>R</variation>
    <location>
        <position position="196"/>
    </location>
</feature>
<feature type="sequence variant" id="VAR_024242" description="In dbSNP:rs560096." evidence="22">
    <original>L</original>
    <variation>S</variation>
    <location>
        <position position="201"/>
    </location>
</feature>
<feature type="sequence variant" id="VAR_072694" description="In CMT2S; dbSNP:rs724159958." evidence="20">
    <original>F</original>
    <variation>V</variation>
    <location>
        <position position="202"/>
    </location>
</feature>
<feature type="sequence variant" id="VAR_022322" description="In HMNR1; dbSNP:rs137852666." evidence="9">
    <original>H</original>
    <variation>R</variation>
    <location>
        <position position="213"/>
    </location>
</feature>
<feature type="sequence variant" id="VAR_058499" description="In HMNR1; dbSNP:rs1594422676." evidence="11">
    <original>P</original>
    <variation>L</variation>
    <location>
        <position position="216"/>
    </location>
</feature>
<feature type="sequence variant" id="VAR_022323" description="In HMNR1; severe reduction of ATPase activity and loss of helicase activity on RNA duplices; dbSNP:rs1594422709." evidence="10 16">
    <original>T</original>
    <variation>A</variation>
    <location>
        <position position="221"/>
    </location>
</feature>
<feature type="sequence variant" id="VAR_022324" description="In HMNR1; severe reduction of ATPase activity and loss of helicase activity on RNA duplices; dbSNP:rs1594427373." evidence="10 16">
    <original>C</original>
    <variation>R</variation>
    <location>
        <position position="241"/>
    </location>
</feature>
<feature type="sequence variant" id="VAR_058500" description="In HMNR1; dbSNP:rs1594427489." evidence="11">
    <original>L</original>
    <variation>P</variation>
    <location>
        <position position="251"/>
    </location>
</feature>
<feature type="sequence variant" id="VAR_024243" description="In dbSNP:rs10896380." evidence="22">
    <original>I</original>
    <variation>V</variation>
    <location>
        <position position="275"/>
    </location>
</feature>
<feature type="sequence variant" id="VAR_022325" description="In HMNR1; dbSNP:rs1594431740." evidence="10">
    <original>E</original>
    <variation>K</variation>
    <location>
        <position position="334"/>
    </location>
</feature>
<feature type="sequence variant" id="VAR_022326" description="In HMNR1; dbSNP:rs201060167." evidence="10 14">
    <original>L</original>
    <variation>P</variation>
    <location>
        <position position="361"/>
    </location>
</feature>
<feature type="sequence variant" id="VAR_022327" description="In HMNR1; dbSNP:rs1594445394." evidence="10">
    <original>L</original>
    <variation>P</variation>
    <location>
        <position position="364"/>
    </location>
</feature>
<feature type="sequence variant" id="VAR_072695" description="In HMNR1; dbSNP:rs137852670." evidence="12">
    <original>F</original>
    <variation>L</variation>
    <location>
        <position position="369"/>
    </location>
</feature>
<feature type="sequence variant" id="VAR_072696" description="In CMT2S; dbSNP:rs724159959." evidence="20">
    <original>V</original>
    <variation>G</variation>
    <location>
        <position position="373"/>
    </location>
</feature>
<feature type="sequence variant" id="VAR_022328" description="In HMNR1; severe reduction of ATPase activity and loss of helicase activity on RNA duplices; dbSNP:rs776730737." evidence="10 16">
    <original>E</original>
    <variation>K</variation>
    <location>
        <position position="382"/>
    </location>
</feature>
<feature type="sequence variant" id="VAR_058501" description="In HMNR1; dbSNP:rs759641927." evidence="14">
    <original>W</original>
    <variation>R</variation>
    <location>
        <position position="386"/>
    </location>
</feature>
<feature type="sequence variant" id="VAR_022329" description="In HMNR1; dbSNP:rs1555247218." evidence="10">
    <original>L</original>
    <variation>P</variation>
    <location>
        <position position="426"/>
    </location>
</feature>
<feature type="sequence variant" id="VAR_058502" description="In HMNR1; severe reduction of ATPase activity and loss of helicase activity on RNA duplices; dbSNP:rs571142182." evidence="14 16">
    <original>H</original>
    <variation>P</variation>
    <location>
        <position position="445"/>
    </location>
</feature>
<feature type="sequence variant" id="VAR_058503" description="In HMNR1; dbSNP:rs1594451536." evidence="14">
    <original>L</original>
    <variation>P</variation>
    <location>
        <position position="472"/>
    </location>
</feature>
<feature type="sequence variant" id="VAR_058504" description="In HMNR1; does not affect activity; reduces protein steady-state levels; dbSNP:rs780594709." evidence="15 16">
    <original>T</original>
    <variation>I</variation>
    <location>
        <position position="493"/>
    </location>
</feature>
<feature type="sequence variant" id="VAR_022330" description="In HMNR1; dbSNP:rs137852665." evidence="9">
    <original>E</original>
    <variation>K</variation>
    <location>
        <position position="514"/>
    </location>
</feature>
<feature type="sequence variant" id="VAR_072697" description="In CMT2S; dbSNP:rs724159960." evidence="20">
    <original>A</original>
    <variation>T</variation>
    <location>
        <position position="528"/>
    </location>
</feature>
<feature type="sequence variant" id="VAR_055226" description="In dbSNP:rs7122089.">
    <original>P</original>
    <variation>A</variation>
    <location>
        <position position="557"/>
    </location>
</feature>
<feature type="sequence variant" id="VAR_022331" description="In HMNR1; does not affect ATPase activity; loss of helicase activity on RNA duplices; dbSNP:rs770111639." evidence="10 11 16">
    <original>D</original>
    <variation>N</variation>
    <location>
        <position position="565"/>
    </location>
</feature>
<feature type="sequence variant" id="VAR_022332" description="In HMNR1; dbSNP:rs775542203." evidence="10">
    <location>
        <position position="572"/>
    </location>
</feature>
<feature type="sequence variant" id="VAR_022333" description="In HMNR1; dbSNP:rs1483165002." evidence="10 11">
    <original>L</original>
    <variation>P</variation>
    <location>
        <position position="577"/>
    </location>
</feature>
<feature type="sequence variant" id="VAR_022334" description="In HMNR1; dbSNP:rs137852667." evidence="9">
    <original>V</original>
    <variation>I</variation>
    <location>
        <position position="580"/>
    </location>
</feature>
<feature type="sequence variant" id="VAR_058505" description="In HMNR1; dbSNP:rs1594454382." evidence="14">
    <original>R</original>
    <variation>S</variation>
    <location>
        <position position="581"/>
    </location>
</feature>
<feature type="sequence variant" id="VAR_022335" description="In HMNR1; severe reduction of ATPase activity and loss of helicase activity on RNA duplices; dbSNP:rs1594454388." evidence="10 16">
    <original>N</original>
    <variation>I</variation>
    <location>
        <position position="583"/>
    </location>
</feature>
<feature type="sequence variant" id="VAR_022336" description="In HMNR1; dbSNP:rs56052951." evidence="10">
    <original>G</original>
    <variation>C</variation>
    <location>
        <position position="586"/>
    </location>
</feature>
<feature type="sequence variant" id="VAR_058506" description="In HMNR1; dbSNP:rs1465803265." evidence="11">
    <original>R</original>
    <variation>C</variation>
    <location>
        <position position="603"/>
    </location>
</feature>
<feature type="sequence variant" id="VAR_022337" description="In HMNR1; severe reduction of ATPase activity and loss of helicase activity on RNA duplices; dbSNP:rs151079750." evidence="10 16">
    <original>R</original>
    <variation>H</variation>
    <location>
        <position position="603"/>
    </location>
</feature>
<feature type="sequence variant" id="VAR_022338" description="In HMNR1; dbSNP:rs201563456." evidence="10 11">
    <original>R</original>
    <variation>C</variation>
    <location>
        <position position="637"/>
    </location>
</feature>
<feature type="sequence variant" id="VAR_020147" description="In dbSNP:rs622082.">
    <original>T</original>
    <variation>A</variation>
    <location>
        <position position="671"/>
    </location>
</feature>
<feature type="sequence variant" id="VAR_021899" description="In dbSNP:rs2236654.">
    <original>R</original>
    <variation>W</variation>
    <location>
        <position position="694"/>
    </location>
</feature>
<feature type="sequence variant" id="VAR_022339" description="In dbSNP:rs17612126." evidence="13">
    <original>T</original>
    <variation>K</variation>
    <location>
        <position position="879"/>
    </location>
</feature>
<feature type="sequence variant" id="VAR_021900" description="In dbSNP:rs2275996.">
    <original>E</original>
    <variation>K</variation>
    <location>
        <position position="928"/>
    </location>
</feature>
<feature type="sequence variant" id="VAR_022340" description="In HMNR1; uncertain significance; dbSNP:rs147674615." evidence="10">
    <original>D</original>
    <variation>E</variation>
    <location>
        <position position="974"/>
    </location>
</feature>
<feature type="sequence conflict" description="In Ref. 1; AAA53082." evidence="24" ref="1">
    <original>I</original>
    <variation>N</variation>
    <location>
        <position position="292"/>
    </location>
</feature>
<feature type="sequence conflict" description="In Ref. 1; AAA53082." evidence="24" ref="1">
    <original>L</original>
    <variation>V</variation>
    <location>
        <position position="461"/>
    </location>
</feature>
<feature type="sequence conflict" description="In Ref. 6; AAA58611." evidence="24" ref="6">
    <original>VDTA</original>
    <variation>GGRV</variation>
    <location>
        <begin position="491"/>
        <end position="494"/>
    </location>
</feature>
<feature type="sequence conflict" description="In Ref. 6; AAA58611." evidence="24" ref="6">
    <original>E</original>
    <variation>K</variation>
    <location>
        <position position="863"/>
    </location>
</feature>
<feature type="sequence conflict" description="In Ref. 6; AAA58611." evidence="24" ref="6">
    <original>K</original>
    <variation>T</variation>
    <location>
        <position position="866"/>
    </location>
</feature>
<feature type="helix" evidence="32">
    <location>
        <begin position="4"/>
        <end position="33"/>
    </location>
</feature>
<feature type="helix" evidence="32">
    <location>
        <begin position="37"/>
        <end position="40"/>
    </location>
</feature>
<feature type="helix" evidence="32">
    <location>
        <begin position="41"/>
        <end position="43"/>
    </location>
</feature>
<feature type="strand" evidence="32">
    <location>
        <begin position="45"/>
        <end position="57"/>
    </location>
</feature>
<feature type="strand" evidence="32">
    <location>
        <begin position="59"/>
        <end position="61"/>
    </location>
</feature>
<feature type="strand" evidence="32">
    <location>
        <begin position="63"/>
        <end position="70"/>
    </location>
</feature>
<feature type="strand" evidence="33">
    <location>
        <begin position="71"/>
        <end position="74"/>
    </location>
</feature>
<feature type="strand" evidence="32">
    <location>
        <begin position="88"/>
        <end position="93"/>
    </location>
</feature>
<feature type="turn" evidence="32">
    <location>
        <begin position="94"/>
        <end position="97"/>
    </location>
</feature>
<feature type="strand" evidence="32">
    <location>
        <begin position="102"/>
        <end position="110"/>
    </location>
</feature>
<feature type="strand" evidence="32">
    <location>
        <begin position="113"/>
        <end position="117"/>
    </location>
</feature>
<feature type="strand" evidence="32">
    <location>
        <begin position="134"/>
        <end position="139"/>
    </location>
</feature>
<feature type="helix" evidence="32">
    <location>
        <begin position="142"/>
        <end position="156"/>
    </location>
</feature>
<feature type="strand" evidence="33">
    <location>
        <begin position="160"/>
        <end position="162"/>
    </location>
</feature>
<feature type="helix" evidence="32">
    <location>
        <begin position="164"/>
        <end position="170"/>
    </location>
</feature>
<feature type="strand" evidence="33">
    <location>
        <begin position="172"/>
        <end position="174"/>
    </location>
</feature>
<feature type="helix" evidence="32">
    <location>
        <begin position="194"/>
        <end position="205"/>
    </location>
</feature>
<feature type="strand" evidence="32">
    <location>
        <begin position="207"/>
        <end position="213"/>
    </location>
</feature>
<feature type="helix" evidence="32">
    <location>
        <begin position="220"/>
        <end position="233"/>
    </location>
</feature>
<feature type="strand" evidence="32">
    <location>
        <begin position="238"/>
        <end position="244"/>
    </location>
</feature>
<feature type="helix" evidence="32">
    <location>
        <begin position="245"/>
        <end position="257"/>
    </location>
</feature>
<feature type="strand" evidence="32">
    <location>
        <begin position="262"/>
        <end position="264"/>
    </location>
</feature>
<feature type="helix" evidence="32">
    <location>
        <begin position="273"/>
        <end position="276"/>
    </location>
</feature>
<feature type="helix" evidence="32">
    <location>
        <begin position="280"/>
        <end position="284"/>
    </location>
</feature>
<feature type="turn" evidence="32">
    <location>
        <begin position="285"/>
        <end position="288"/>
    </location>
</feature>
<feature type="helix" evidence="32">
    <location>
        <begin position="293"/>
        <end position="300"/>
    </location>
</feature>
<feature type="strand" evidence="33">
    <location>
        <begin position="302"/>
        <end position="304"/>
    </location>
</feature>
<feature type="turn" evidence="32">
    <location>
        <begin position="305"/>
        <end position="308"/>
    </location>
</feature>
<feature type="helix" evidence="32">
    <location>
        <begin position="320"/>
        <end position="344"/>
    </location>
</feature>
<feature type="strand" evidence="32">
    <location>
        <begin position="346"/>
        <end position="351"/>
    </location>
</feature>
<feature type="turn" evidence="32">
    <location>
        <begin position="352"/>
        <end position="355"/>
    </location>
</feature>
<feature type="strand" evidence="32">
    <location>
        <begin position="357"/>
        <end position="359"/>
    </location>
</feature>
<feature type="helix" evidence="32">
    <location>
        <begin position="360"/>
        <end position="363"/>
    </location>
</feature>
<feature type="strand" evidence="32">
    <location>
        <begin position="370"/>
        <end position="374"/>
    </location>
</feature>
<feature type="helix" evidence="32">
    <location>
        <begin position="377"/>
        <end position="379"/>
    </location>
</feature>
<feature type="helix" evidence="32">
    <location>
        <begin position="382"/>
        <end position="385"/>
    </location>
</feature>
<feature type="turn" evidence="32">
    <location>
        <begin position="386"/>
        <end position="388"/>
    </location>
</feature>
<feature type="helix" evidence="32">
    <location>
        <begin position="389"/>
        <end position="391"/>
    </location>
</feature>
<feature type="strand" evidence="32">
    <location>
        <begin position="392"/>
        <end position="399"/>
    </location>
</feature>
<feature type="helix" evidence="32">
    <location>
        <begin position="411"/>
        <end position="415"/>
    </location>
</feature>
<feature type="turn" evidence="32">
    <location>
        <begin position="416"/>
        <end position="419"/>
    </location>
</feature>
<feature type="helix" evidence="32">
    <location>
        <begin position="422"/>
        <end position="430"/>
    </location>
</feature>
<feature type="helix" evidence="32">
    <location>
        <begin position="431"/>
        <end position="433"/>
    </location>
</feature>
<feature type="strand" evidence="32">
    <location>
        <begin position="435"/>
        <end position="437"/>
    </location>
</feature>
<feature type="strand" evidence="32">
    <location>
        <begin position="440"/>
        <end position="444"/>
    </location>
</feature>
<feature type="helix" evidence="32">
    <location>
        <begin position="446"/>
        <end position="456"/>
    </location>
</feature>
<feature type="turn" evidence="32">
    <location>
        <begin position="465"/>
        <end position="469"/>
    </location>
</feature>
<feature type="helix" evidence="32">
    <location>
        <begin position="472"/>
        <end position="474"/>
    </location>
</feature>
<feature type="turn" evidence="32">
    <location>
        <begin position="482"/>
        <end position="485"/>
    </location>
</feature>
<feature type="strand" evidence="32">
    <location>
        <begin position="487"/>
        <end position="492"/>
    </location>
</feature>
<feature type="helix" evidence="32">
    <location>
        <begin position="512"/>
        <end position="527"/>
    </location>
</feature>
<feature type="helix" evidence="32">
    <location>
        <begin position="532"/>
        <end position="534"/>
    </location>
</feature>
<feature type="strand" evidence="32">
    <location>
        <begin position="535"/>
        <end position="540"/>
    </location>
</feature>
<feature type="helix" evidence="32">
    <location>
        <begin position="542"/>
        <end position="552"/>
    </location>
</feature>
<feature type="turn" evidence="32">
    <location>
        <begin position="553"/>
        <end position="555"/>
    </location>
</feature>
<feature type="strand" evidence="32">
    <location>
        <begin position="560"/>
        <end position="563"/>
    </location>
</feature>
<feature type="helix" evidence="32">
    <location>
        <begin position="564"/>
        <end position="567"/>
    </location>
</feature>
<feature type="strand" evidence="32">
    <location>
        <begin position="572"/>
        <end position="578"/>
    </location>
</feature>
<feature type="turn" evidence="33">
    <location>
        <begin position="589"/>
        <end position="592"/>
    </location>
</feature>
<feature type="helix" evidence="32">
    <location>
        <begin position="594"/>
        <end position="602"/>
    </location>
</feature>
<feature type="strand" evidence="32">
    <location>
        <begin position="604"/>
        <end position="612"/>
    </location>
</feature>
<feature type="helix" evidence="32">
    <location>
        <begin position="614"/>
        <end position="617"/>
    </location>
</feature>
<feature type="helix" evidence="32">
    <location>
        <begin position="621"/>
        <end position="632"/>
    </location>
</feature>
<feature type="strand" evidence="32">
    <location>
        <begin position="633"/>
        <end position="638"/>
    </location>
</feature>
<feature type="helix" evidence="32">
    <location>
        <begin position="639"/>
        <end position="641"/>
    </location>
</feature>
<feature type="helix" evidence="31">
    <location>
        <begin position="727"/>
        <end position="739"/>
    </location>
</feature>
<feature type="strand" evidence="31">
    <location>
        <begin position="742"/>
        <end position="746"/>
    </location>
</feature>
<feature type="helix" evidence="31">
    <location>
        <begin position="753"/>
        <end position="764"/>
    </location>
</feature>
<feature type="strand" evidence="31">
    <location>
        <begin position="767"/>
        <end position="772"/>
    </location>
</feature>
<feature type="strand" evidence="31">
    <location>
        <begin position="774"/>
        <end position="776"/>
    </location>
</feature>
<feature type="strand" evidence="31">
    <location>
        <begin position="779"/>
        <end position="784"/>
    </location>
</feature>
<accession>P38935</accession>
<accession>A0PJD2</accession>
<accession>Q00443</accession>
<accession>Q14177</accession>
<sequence length="993" mass="109149">MASAAVESFVTKQLDLLELERDAEVEERRSWQENISLKELQSRGVCLLKLQVSSQRTGLYGRLLVTFEPRRYGSAAALPSNSFTSGDIVGLYDAANEGSQLATGILTRVTQKSVTVAFDESHDFQLSLDRENSYRLLKLANDVTYRRLKKALIALKKYHSGPASSLIEVLFGRSAPSPASEIHPLTFFNTCLDTSQKEAVLFALSQKELAIIHGPPGTGKTTTVVEIILQAVKQGLKVLCCAPSNIAVDNLVERLALCKQRILRLGHPARLLESIQQHSLDAVLARSDSAQIVADIRKDIDQVFVKNKKTQDKREKSNFRNEIKLLRKELKEREEAAMLESLTSANVVLATNTGASADGPLKLLPESYFDVVVIDECAQALEASCWIPLLKARKCILAGDHKQLPPTTVSHKAALAGLSLSLMERLAEEYGARVVRTLTVQYRMHQAIMRWASDTMYLGQLTAHSSVARHLLRDLPGVAATEETGVPLLLVDTAGCGLFELEEEDEQSKGNPGEVRLVSLHIQALVDAGVPARDIAVVSPYNLQVDLLRQSLVHRHPELEIKSVDGFQGREKEAVILSFVRSNRKGEVGFLAEDRRINVAVTRARRHVAVICDSRTVNNHAFLKTLVEYFTQHGEVRTAFEYLDDIVPENYSHENSQGSSHAATKPQGPATSTRTGSQRQEGGQEAAAPARQGRKKPAGKSLASEAPSQPSLNGGSPEGVESQDGVDHFRAMIVEFMASKKMQLEFPPSLNSHDRLRVHQIAEEHGLRHDSSGEGKRRFITVSKRAPRPRAALGPPAGTGGPAPLQPVPPTPAQTEQPPREQRGPDQPDLRTLHLERLQRVRSAQGQPASKEQQASGQQKLPEKKKKKAKGHPATDLPTEEDFEALVSAAVKADNTCGFAKCTAGVTTLGQFCQLCSRRYCLSHHLPEIHGCGERARAHARQRISREGVLYAGSGTKNGSLDPAKRAQLQRRLDKKLSELSNQRTSRRKERGT</sequence>
<gene>
    <name type="primary">IGHMBP2</name>
    <name type="synonym">SMBP2</name>
    <name type="synonym">SMUBP2</name>
</gene>